<reference key="1">
    <citation type="journal article" date="2002" name="Science">
        <title>50 million years of genomic stasis in endosymbiotic bacteria.</title>
        <authorList>
            <person name="Tamas I."/>
            <person name="Klasson L."/>
            <person name="Canbaeck B."/>
            <person name="Naeslund A.K."/>
            <person name="Eriksson A.-S."/>
            <person name="Wernegreen J.J."/>
            <person name="Sandstroem J.P."/>
            <person name="Moran N.A."/>
            <person name="Andersson S.G.E."/>
        </authorList>
    </citation>
    <scope>NUCLEOTIDE SEQUENCE [LARGE SCALE GENOMIC DNA]</scope>
    <source>
        <strain>Sg</strain>
    </source>
</reference>
<proteinExistence type="inferred from homology"/>
<keyword id="KW-0028">Amino-acid biosynthesis</keyword>
<keyword id="KW-0055">Arginine biosynthesis</keyword>
<keyword id="KW-0963">Cytoplasm</keyword>
<keyword id="KW-0808">Transferase</keyword>
<organism>
    <name type="scientific">Buchnera aphidicola subsp. Schizaphis graminum (strain Sg)</name>
    <dbReference type="NCBI Taxonomy" id="198804"/>
    <lineage>
        <taxon>Bacteria</taxon>
        <taxon>Pseudomonadati</taxon>
        <taxon>Pseudomonadota</taxon>
        <taxon>Gammaproteobacteria</taxon>
        <taxon>Enterobacterales</taxon>
        <taxon>Erwiniaceae</taxon>
        <taxon>Buchnera</taxon>
    </lineage>
</organism>
<protein>
    <recommendedName>
        <fullName>Ornithine carbamoyltransferase</fullName>
        <shortName>OTCase</shortName>
        <ecNumber>2.1.3.3</ecNumber>
    </recommendedName>
</protein>
<feature type="chain" id="PRO_0000112898" description="Ornithine carbamoyltransferase">
    <location>
        <begin position="1"/>
        <end position="338"/>
    </location>
</feature>
<feature type="binding site" evidence="2">
    <location>
        <begin position="56"/>
        <end position="59"/>
    </location>
    <ligand>
        <name>carbamoyl phosphate</name>
        <dbReference type="ChEBI" id="CHEBI:58228"/>
    </ligand>
</feature>
<feature type="binding site" evidence="2">
    <location>
        <position position="107"/>
    </location>
    <ligand>
        <name>carbamoyl phosphate</name>
        <dbReference type="ChEBI" id="CHEBI:58228"/>
    </ligand>
</feature>
<feature type="binding site" evidence="2">
    <location>
        <begin position="134"/>
        <end position="137"/>
    </location>
    <ligand>
        <name>carbamoyl phosphate</name>
        <dbReference type="ChEBI" id="CHEBI:58228"/>
    </ligand>
</feature>
<feature type="binding site" evidence="2">
    <location>
        <position position="168"/>
    </location>
    <ligand>
        <name>L-ornithine</name>
        <dbReference type="ChEBI" id="CHEBI:46911"/>
    </ligand>
</feature>
<feature type="binding site" evidence="2">
    <location>
        <position position="232"/>
    </location>
    <ligand>
        <name>L-ornithine</name>
        <dbReference type="ChEBI" id="CHEBI:46911"/>
    </ligand>
</feature>
<feature type="binding site" evidence="2">
    <location>
        <begin position="236"/>
        <end position="237"/>
    </location>
    <ligand>
        <name>L-ornithine</name>
        <dbReference type="ChEBI" id="CHEBI:46911"/>
    </ligand>
</feature>
<feature type="binding site" evidence="2">
    <location>
        <begin position="274"/>
        <end position="275"/>
    </location>
    <ligand>
        <name>carbamoyl phosphate</name>
        <dbReference type="ChEBI" id="CHEBI:58228"/>
    </ligand>
</feature>
<feature type="binding site" evidence="2">
    <location>
        <position position="320"/>
    </location>
    <ligand>
        <name>carbamoyl phosphate</name>
        <dbReference type="ChEBI" id="CHEBI:58228"/>
    </ligand>
</feature>
<accession>P59100</accession>
<dbReference type="EC" id="2.1.3.3"/>
<dbReference type="EMBL" id="AE013218">
    <property type="protein sequence ID" value="AAM67909.1"/>
    <property type="molecule type" value="Genomic_DNA"/>
</dbReference>
<dbReference type="RefSeq" id="WP_011053876.1">
    <property type="nucleotide sequence ID" value="NC_004061.1"/>
</dbReference>
<dbReference type="SMR" id="P59100"/>
<dbReference type="STRING" id="198804.BUsg_356"/>
<dbReference type="GeneID" id="93003826"/>
<dbReference type="KEGG" id="bas:BUsg_356"/>
<dbReference type="eggNOG" id="COG0078">
    <property type="taxonomic scope" value="Bacteria"/>
</dbReference>
<dbReference type="HOGENOM" id="CLU_043846_3_1_6"/>
<dbReference type="UniPathway" id="UPA00068">
    <property type="reaction ID" value="UER00112"/>
</dbReference>
<dbReference type="Proteomes" id="UP000000416">
    <property type="component" value="Chromosome"/>
</dbReference>
<dbReference type="GO" id="GO:0005737">
    <property type="term" value="C:cytoplasm"/>
    <property type="evidence" value="ECO:0007669"/>
    <property type="project" value="UniProtKB-SubCell"/>
</dbReference>
<dbReference type="GO" id="GO:0016597">
    <property type="term" value="F:amino acid binding"/>
    <property type="evidence" value="ECO:0007669"/>
    <property type="project" value="InterPro"/>
</dbReference>
<dbReference type="GO" id="GO:0004585">
    <property type="term" value="F:ornithine carbamoyltransferase activity"/>
    <property type="evidence" value="ECO:0007669"/>
    <property type="project" value="UniProtKB-UniRule"/>
</dbReference>
<dbReference type="GO" id="GO:0042450">
    <property type="term" value="P:arginine biosynthetic process via ornithine"/>
    <property type="evidence" value="ECO:0007669"/>
    <property type="project" value="TreeGrafter"/>
</dbReference>
<dbReference type="GO" id="GO:0019240">
    <property type="term" value="P:citrulline biosynthetic process"/>
    <property type="evidence" value="ECO:0007669"/>
    <property type="project" value="TreeGrafter"/>
</dbReference>
<dbReference type="GO" id="GO:0006526">
    <property type="term" value="P:L-arginine biosynthetic process"/>
    <property type="evidence" value="ECO:0007669"/>
    <property type="project" value="UniProtKB-UniRule"/>
</dbReference>
<dbReference type="Gene3D" id="3.40.50.1370">
    <property type="entry name" value="Aspartate/ornithine carbamoyltransferase"/>
    <property type="match status" value="2"/>
</dbReference>
<dbReference type="HAMAP" id="MF_01109">
    <property type="entry name" value="OTCase"/>
    <property type="match status" value="1"/>
</dbReference>
<dbReference type="InterPro" id="IPR006132">
    <property type="entry name" value="Asp/Orn_carbamoyltranf_P-bd"/>
</dbReference>
<dbReference type="InterPro" id="IPR006130">
    <property type="entry name" value="Asp/Orn_carbamoylTrfase"/>
</dbReference>
<dbReference type="InterPro" id="IPR036901">
    <property type="entry name" value="Asp/Orn_carbamoylTrfase_sf"/>
</dbReference>
<dbReference type="InterPro" id="IPR006131">
    <property type="entry name" value="Asp_carbamoyltransf_Asp/Orn-bd"/>
</dbReference>
<dbReference type="InterPro" id="IPR002292">
    <property type="entry name" value="Orn/put_carbamltrans"/>
</dbReference>
<dbReference type="InterPro" id="IPR024904">
    <property type="entry name" value="OTCase_ArgI"/>
</dbReference>
<dbReference type="NCBIfam" id="TIGR00658">
    <property type="entry name" value="orni_carb_tr"/>
    <property type="match status" value="1"/>
</dbReference>
<dbReference type="NCBIfam" id="NF001986">
    <property type="entry name" value="PRK00779.1"/>
    <property type="match status" value="1"/>
</dbReference>
<dbReference type="PANTHER" id="PTHR45753:SF4">
    <property type="entry name" value="ORNITHINE CARBAMOYLTRANSFERASE SUBUNIT F-RELATED"/>
    <property type="match status" value="1"/>
</dbReference>
<dbReference type="PANTHER" id="PTHR45753">
    <property type="entry name" value="ORNITHINE CARBAMOYLTRANSFERASE, MITOCHONDRIAL"/>
    <property type="match status" value="1"/>
</dbReference>
<dbReference type="Pfam" id="PF00185">
    <property type="entry name" value="OTCace"/>
    <property type="match status" value="1"/>
</dbReference>
<dbReference type="Pfam" id="PF02729">
    <property type="entry name" value="OTCace_N"/>
    <property type="match status" value="1"/>
</dbReference>
<dbReference type="PRINTS" id="PR00100">
    <property type="entry name" value="AOTCASE"/>
</dbReference>
<dbReference type="PRINTS" id="PR00102">
    <property type="entry name" value="OTCASE"/>
</dbReference>
<dbReference type="SUPFAM" id="SSF53671">
    <property type="entry name" value="Aspartate/ornithine carbamoyltransferase"/>
    <property type="match status" value="1"/>
</dbReference>
<dbReference type="PROSITE" id="PS00097">
    <property type="entry name" value="CARBAMOYLTRANSFERASE"/>
    <property type="match status" value="1"/>
</dbReference>
<sequence>MNCLYQRDCLRLLDFTTAELKHIITLSEKLKKTKQNRQEIKLLKQKNIALIFEKESTRTRCSFEVAAFDQGANVTYLGPGSTHLGTKESIEDTARVLSRLYDGIQYRGHNHKTIEILAQYSTVPVWNGLTEKFHPTQLIADLLTIKEIFPNRNFSDIKCAYVGDSRNNIGNSLLEAASIVGLNLYLVSPKQYWPEKNLFIECKKIIKKNQGNIICTENISEGVKNADFIYTDVWVSMGEHHKIWKERIELLKNYQVNDSMIKMTNNSKVKILHCLPALHDQKTSIGKSILKKYGLKDGMEITDNIFQKHQKTIFEQAENRLHTIKALLVSSLIKEMNF</sequence>
<name>OTC_BUCAP</name>
<gene>
    <name type="primary">argI</name>
    <name type="ordered locus">BUsg_356</name>
</gene>
<evidence type="ECO:0000250" key="1"/>
<evidence type="ECO:0000255" key="2">
    <source>
        <dbReference type="HAMAP-Rule" id="MF_01109"/>
    </source>
</evidence>
<evidence type="ECO:0000305" key="3"/>
<comment type="function">
    <text evidence="1">Reversibly catalyzes the transfer of the carbamoyl group from carbamoyl phosphate (CP) to the N(epsilon) atom of ornithine (ORN) to produce L-citrulline.</text>
</comment>
<comment type="catalytic activity">
    <reaction>
        <text>carbamoyl phosphate + L-ornithine = L-citrulline + phosphate + H(+)</text>
        <dbReference type="Rhea" id="RHEA:19513"/>
        <dbReference type="ChEBI" id="CHEBI:15378"/>
        <dbReference type="ChEBI" id="CHEBI:43474"/>
        <dbReference type="ChEBI" id="CHEBI:46911"/>
        <dbReference type="ChEBI" id="CHEBI:57743"/>
        <dbReference type="ChEBI" id="CHEBI:58228"/>
        <dbReference type="EC" id="2.1.3.3"/>
    </reaction>
</comment>
<comment type="pathway">
    <text>Amino-acid biosynthesis; L-arginine biosynthesis; L-arginine from L-ornithine and carbamoyl phosphate: step 1/3.</text>
</comment>
<comment type="subcellular location">
    <subcellularLocation>
        <location evidence="1">Cytoplasm</location>
    </subcellularLocation>
</comment>
<comment type="similarity">
    <text evidence="3">Belongs to the aspartate/ornithine carbamoyltransferase superfamily. OTCase family.</text>
</comment>